<protein>
    <recommendedName>
        <fullName>Uncharacterized peptidase cgR_1176</fullName>
    </recommendedName>
</protein>
<feature type="signal peptide" evidence="4">
    <location>
        <begin position="1"/>
        <end position="32"/>
    </location>
</feature>
<feature type="chain" id="PRO_0000392966" description="Uncharacterized peptidase cgR_1176" evidence="4">
    <location>
        <begin position="33"/>
        <end position="278"/>
    </location>
</feature>
<feature type="domain" description="Peptidase S1" evidence="1 3">
    <location>
        <begin position="33"/>
        <end position="236"/>
    </location>
</feature>
<feature type="active site" description="Charge relay system" evidence="1 3">
    <location>
        <position position="74"/>
    </location>
</feature>
<feature type="active site" description="Charge relay system" evidence="1 3">
    <location>
        <position position="123"/>
    </location>
</feature>
<feature type="active site" description="Charge relay system" evidence="1 3">
    <location>
        <position position="189"/>
    </location>
</feature>
<feature type="disulfide bond" evidence="2 3">
    <location>
        <begin position="59"/>
        <end position="75"/>
    </location>
</feature>
<name>Y1176_CORGB</name>
<evidence type="ECO:0000250" key="1">
    <source>
        <dbReference type="UniProtKB" id="P07288"/>
    </source>
</evidence>
<evidence type="ECO:0000250" key="2">
    <source>
        <dbReference type="UniProtKB" id="Q6H321"/>
    </source>
</evidence>
<evidence type="ECO:0000255" key="3">
    <source>
        <dbReference type="PROSITE-ProRule" id="PRU00274"/>
    </source>
</evidence>
<evidence type="ECO:0000269" key="4">
    <source>
    </source>
</evidence>
<evidence type="ECO:0000305" key="5"/>
<evidence type="ECO:0000312" key="6">
    <source>
        <dbReference type="EMBL" id="BAF54154.1"/>
    </source>
</evidence>
<organism>
    <name type="scientific">Corynebacterium glutamicum (strain R)</name>
    <dbReference type="NCBI Taxonomy" id="340322"/>
    <lineage>
        <taxon>Bacteria</taxon>
        <taxon>Bacillati</taxon>
        <taxon>Actinomycetota</taxon>
        <taxon>Actinomycetes</taxon>
        <taxon>Mycobacteriales</taxon>
        <taxon>Corynebacteriaceae</taxon>
        <taxon>Corynebacterium</taxon>
    </lineage>
</organism>
<accession>A4QD57</accession>
<dbReference type="EMBL" id="AP009044">
    <property type="protein sequence ID" value="BAF54154.1"/>
    <property type="molecule type" value="Genomic_DNA"/>
</dbReference>
<dbReference type="RefSeq" id="WP_003858612.1">
    <property type="nucleotide sequence ID" value="NC_009342.1"/>
</dbReference>
<dbReference type="SMR" id="A4QD57"/>
<dbReference type="KEGG" id="cgt:cgR_1176"/>
<dbReference type="HOGENOM" id="CLU_091277_0_0_11"/>
<dbReference type="PhylomeDB" id="A4QD57"/>
<dbReference type="Proteomes" id="UP000006698">
    <property type="component" value="Chromosome"/>
</dbReference>
<dbReference type="GO" id="GO:0005576">
    <property type="term" value="C:extracellular region"/>
    <property type="evidence" value="ECO:0000314"/>
    <property type="project" value="UniProtKB"/>
</dbReference>
<dbReference type="GO" id="GO:0004252">
    <property type="term" value="F:serine-type endopeptidase activity"/>
    <property type="evidence" value="ECO:0007669"/>
    <property type="project" value="InterPro"/>
</dbReference>
<dbReference type="GO" id="GO:0006508">
    <property type="term" value="P:proteolysis"/>
    <property type="evidence" value="ECO:0007669"/>
    <property type="project" value="UniProtKB-KW"/>
</dbReference>
<dbReference type="Gene3D" id="2.40.10.10">
    <property type="entry name" value="Trypsin-like serine proteases"/>
    <property type="match status" value="1"/>
</dbReference>
<dbReference type="InterPro" id="IPR050430">
    <property type="entry name" value="Peptidase_S1"/>
</dbReference>
<dbReference type="InterPro" id="IPR009003">
    <property type="entry name" value="Peptidase_S1_PA"/>
</dbReference>
<dbReference type="InterPro" id="IPR043504">
    <property type="entry name" value="Peptidase_S1_PA_chymotrypsin"/>
</dbReference>
<dbReference type="InterPro" id="IPR001314">
    <property type="entry name" value="Peptidase_S1A"/>
</dbReference>
<dbReference type="InterPro" id="IPR001254">
    <property type="entry name" value="Trypsin_dom"/>
</dbReference>
<dbReference type="PANTHER" id="PTHR24276:SF98">
    <property type="entry name" value="FI18310P1-RELATED"/>
    <property type="match status" value="1"/>
</dbReference>
<dbReference type="PANTHER" id="PTHR24276">
    <property type="entry name" value="POLYSERASE-RELATED"/>
    <property type="match status" value="1"/>
</dbReference>
<dbReference type="Pfam" id="PF00089">
    <property type="entry name" value="Trypsin"/>
    <property type="match status" value="1"/>
</dbReference>
<dbReference type="PRINTS" id="PR00722">
    <property type="entry name" value="CHYMOTRYPSIN"/>
</dbReference>
<dbReference type="SMART" id="SM00020">
    <property type="entry name" value="Tryp_SPc"/>
    <property type="match status" value="1"/>
</dbReference>
<dbReference type="SUPFAM" id="SSF50494">
    <property type="entry name" value="Trypsin-like serine proteases"/>
    <property type="match status" value="1"/>
</dbReference>
<dbReference type="PROSITE" id="PS50240">
    <property type="entry name" value="TRYPSIN_DOM"/>
    <property type="match status" value="1"/>
</dbReference>
<proteinExistence type="evidence at protein level"/>
<gene>
    <name type="ordered locus">cgR_1176</name>
</gene>
<comment type="subcellular location">
    <subcellularLocation>
        <location evidence="4">Secreted</location>
    </subcellularLocation>
</comment>
<comment type="similarity">
    <text evidence="3">Belongs to the peptidase S1 family.</text>
</comment>
<reference evidence="6" key="1">
    <citation type="journal article" date="2007" name="Microbiology">
        <title>Comparative analysis of the Corynebacterium glutamicum group and complete genome sequence of strain R.</title>
        <authorList>
            <person name="Yukawa H."/>
            <person name="Omumasaba C.A."/>
            <person name="Nonaka H."/>
            <person name="Kos P."/>
            <person name="Okai N."/>
            <person name="Suzuki N."/>
            <person name="Suda M."/>
            <person name="Tsuge Y."/>
            <person name="Watanabe J."/>
            <person name="Ikeda Y."/>
            <person name="Vertes A.A."/>
            <person name="Inui M."/>
        </authorList>
    </citation>
    <scope>NUCLEOTIDE SEQUENCE [LARGE SCALE GENOMIC DNA]</scope>
    <source>
        <strain>R</strain>
    </source>
</reference>
<reference evidence="5" key="2">
    <citation type="journal article" date="2009" name="Appl. Microbiol. Biotechnol.">
        <title>Identification of new secreted proteins and secretion of heterologous amylase by C. glutamicum.</title>
        <authorList>
            <person name="Suzuki N."/>
            <person name="Watanabe K."/>
            <person name="Okibe N."/>
            <person name="Tsuchida Y."/>
            <person name="Inui M."/>
            <person name="Yukawa H."/>
        </authorList>
    </citation>
    <scope>PROTEIN SEQUENCE OF 33-52</scope>
    <scope>SUBCELLULAR LOCATION</scope>
</reference>
<keyword id="KW-0903">Direct protein sequencing</keyword>
<keyword id="KW-1015">Disulfide bond</keyword>
<keyword id="KW-0378">Hydrolase</keyword>
<keyword id="KW-0645">Protease</keyword>
<keyword id="KW-0964">Secreted</keyword>
<keyword id="KW-0720">Serine protease</keyword>
<keyword id="KW-0732">Signal</keyword>
<sequence>MSSASFTTKALSVLAALTAASAPLVAASPAHALANARNVTGSSTTSDSIVRLHIGNTACTGTMITPTWAITARHCIPEDGIAGAAIGSSTLSQFQQVSQAILHPTADLALVELPNQASSNTVDLYGAHVQPGENGQAAGWGGYSAFGQNVAQQADVQIQRRVVNVPSPDRTAVLLEGTVSNGRLVPGDSGGPLYINGQLAGVLSMSTDVENDALDGTVGWYIPVAEHAEWIAYYTGKHIAPIAGAPAELVDATANPTFIPAPQPFTGSSIGGWALGSS</sequence>